<protein>
    <recommendedName>
        <fullName>Acetyl-CoA decarbonylase/synthase complex subunit beta 1</fullName>
        <shortName>ACDS complex subunit beta 1</shortName>
        <ecNumber>2.3.1.169</ecNumber>
    </recommendedName>
    <alternativeName>
        <fullName>ACDS complex acyltransferase 1</fullName>
    </alternativeName>
</protein>
<accession>Q8PZ11</accession>
<keyword id="KW-0012">Acyltransferase</keyword>
<keyword id="KW-0408">Iron</keyword>
<keyword id="KW-0411">Iron-sulfur</keyword>
<keyword id="KW-0479">Metal-binding</keyword>
<keyword id="KW-0484">Methanogenesis</keyword>
<keyword id="KW-0533">Nickel</keyword>
<keyword id="KW-0808">Transferase</keyword>
<reference key="1">
    <citation type="journal article" date="2002" name="J. Mol. Microbiol. Biotechnol.">
        <title>The genome of Methanosarcina mazei: evidence for lateral gene transfer between Bacteria and Archaea.</title>
        <authorList>
            <person name="Deppenmeier U."/>
            <person name="Johann A."/>
            <person name="Hartsch T."/>
            <person name="Merkl R."/>
            <person name="Schmitz R.A."/>
            <person name="Martinez-Arias R."/>
            <person name="Henne A."/>
            <person name="Wiezer A."/>
            <person name="Baeumer S."/>
            <person name="Jacobi C."/>
            <person name="Brueggemann H."/>
            <person name="Lienard T."/>
            <person name="Christmann A."/>
            <person name="Boemecke M."/>
            <person name="Steckel S."/>
            <person name="Bhattacharyya A."/>
            <person name="Lykidis A."/>
            <person name="Overbeek R."/>
            <person name="Klenk H.-P."/>
            <person name="Gunsalus R.P."/>
            <person name="Fritz H.-J."/>
            <person name="Gottschalk G."/>
        </authorList>
    </citation>
    <scope>NUCLEOTIDE SEQUENCE [LARGE SCALE GENOMIC DNA]</scope>
    <source>
        <strain>ATCC BAA-159 / DSM 3647 / Goe1 / Go1 / JCM 11833 / OCM 88</strain>
    </source>
</reference>
<name>ACDB1_METMA</name>
<evidence type="ECO:0000255" key="1"/>
<evidence type="ECO:0000255" key="2">
    <source>
        <dbReference type="HAMAP-Rule" id="MF_01138"/>
    </source>
</evidence>
<evidence type="ECO:0000305" key="3"/>
<sequence>MAEFPFEISPMFEGERVRKEGMFVELGGPKSLGLELVRAADMDAIEDDKVTIIGPDLKDMEEGKTYPWAMIFNIGGELVEPDLESVVERRVHDFINYCQGIMHLNQRYDVWMRVSKDTAAKMDSFEPFGKAVMMLFKTELPFIEKMQVTFYTDKDEVEKQMETAKEIFKARDARTKDLHDEDVEVFYGCTLCQSFAPTNVCVVSPDRISLCGAINWFDGRAAAKVDPEGPQFEIAKGDLLDAVTGEYTGVNEIAKKLSSGEFDKIKLHSFFDSPHTSCGCFEVVGFYIPEVDGIGWVDREYQGMAPNGIGFSTMAGQTGGGKQIVGFLGIGVNYFYSPKFIQADGGWNRVVWLPSKLKEKIDEAIPADLKDKIATENDASDIESLKAFLQEKNHPVVATWAAAEEEEEEEEEEEEVAVAAAPMMMPAAGFQMPAMPMMSGGSSGGIKLTFKNAKITIDRMIISEKKEKK</sequence>
<organism>
    <name type="scientific">Methanosarcina mazei (strain ATCC BAA-159 / DSM 3647 / Goe1 / Go1 / JCM 11833 / OCM 88)</name>
    <name type="common">Methanosarcina frisia</name>
    <dbReference type="NCBI Taxonomy" id="192952"/>
    <lineage>
        <taxon>Archaea</taxon>
        <taxon>Methanobacteriati</taxon>
        <taxon>Methanobacteriota</taxon>
        <taxon>Stenosarchaea group</taxon>
        <taxon>Methanomicrobia</taxon>
        <taxon>Methanosarcinales</taxon>
        <taxon>Methanosarcinaceae</taxon>
        <taxon>Methanosarcina</taxon>
    </lineage>
</organism>
<proteinExistence type="inferred from homology"/>
<feature type="chain" id="PRO_0000155104" description="Acetyl-CoA decarbonylase/synthase complex subunit beta 1">
    <location>
        <begin position="1"/>
        <end position="469"/>
    </location>
</feature>
<feature type="binding site" evidence="1">
    <location>
        <position position="189"/>
    </location>
    <ligand>
        <name>[Ni-Fe-S] cluster</name>
        <dbReference type="ChEBI" id="CHEBI:60400"/>
    </ligand>
</feature>
<feature type="binding site" evidence="1">
    <location>
        <position position="192"/>
    </location>
    <ligand>
        <name>[Ni-Fe-S] cluster</name>
        <dbReference type="ChEBI" id="CHEBI:60400"/>
    </ligand>
</feature>
<feature type="binding site" evidence="1">
    <location>
        <position position="278"/>
    </location>
    <ligand>
        <name>[Ni-Fe-S] cluster</name>
        <dbReference type="ChEBI" id="CHEBI:60400"/>
    </ligand>
</feature>
<feature type="binding site" evidence="1">
    <location>
        <position position="280"/>
    </location>
    <ligand>
        <name>[Ni-Fe-S] cluster</name>
        <dbReference type="ChEBI" id="CHEBI:60400"/>
    </ligand>
</feature>
<comment type="function">
    <text evidence="2">Part of a complex that catalyzes the reversible cleavage of acetyl-CoA, allowing growth on acetate as sole source of carbon and energy. The alpha-epsilon complex generates CO from CO(2), while the beta subunit (this protein) combines the CO with CoA and a methyl group to form acetyl-CoA. The methyl group, which is incorporated into acetyl-CoA, is transferred to the beta subunit by a corrinoid iron-sulfur protein (the gamma-delta complex).</text>
</comment>
<comment type="catalytic activity">
    <reaction evidence="2">
        <text>Co(I)-[corrinoid Fe-S protein] + acetyl-CoA + H(+) = methyl-Co(III)-[corrinoid Fe-S protein] + CO + CoA</text>
        <dbReference type="Rhea" id="RHEA:45212"/>
        <dbReference type="Rhea" id="RHEA-COMP:11110"/>
        <dbReference type="Rhea" id="RHEA-COMP:11111"/>
        <dbReference type="ChEBI" id="CHEBI:15378"/>
        <dbReference type="ChEBI" id="CHEBI:17245"/>
        <dbReference type="ChEBI" id="CHEBI:57287"/>
        <dbReference type="ChEBI" id="CHEBI:57288"/>
        <dbReference type="ChEBI" id="CHEBI:85033"/>
        <dbReference type="ChEBI" id="CHEBI:85035"/>
        <dbReference type="EC" id="2.3.1.169"/>
    </reaction>
</comment>
<comment type="cofactor">
    <cofactor>
        <name>[Ni-Fe-S] cluster</name>
        <dbReference type="ChEBI" id="CHEBI:60400"/>
    </cofactor>
    <text>Binds 1 [Ni-Fe-S] cluster.</text>
</comment>
<comment type="pathway">
    <text>One-carbon metabolism; methanogenesis from acetate.</text>
</comment>
<comment type="subunit">
    <text evidence="3">Monomer. The ACDS complex is made up of alpha, epsilon, beta, gamma and delta chains with a probable stoichiometry of (alpha(2)epsilon(2))(4)-beta(8)-(gamma(1)delta(1))(8) (Potential).</text>
</comment>
<comment type="similarity">
    <text evidence="3">Belongs to the CdhC family.</text>
</comment>
<gene>
    <name type="primary">cdhC1</name>
    <name type="ordered locus">MM_0686</name>
</gene>
<dbReference type="EC" id="2.3.1.169"/>
<dbReference type="EMBL" id="AE008384">
    <property type="protein sequence ID" value="AAM30382.1"/>
    <property type="molecule type" value="Genomic_DNA"/>
</dbReference>
<dbReference type="SMR" id="Q8PZ11"/>
<dbReference type="KEGG" id="mma:MM_0686"/>
<dbReference type="PATRIC" id="fig|192952.21.peg.817"/>
<dbReference type="eggNOG" id="arCOG04360">
    <property type="taxonomic scope" value="Archaea"/>
</dbReference>
<dbReference type="HOGENOM" id="CLU_613408_0_0_2"/>
<dbReference type="UniPathway" id="UPA00642"/>
<dbReference type="Proteomes" id="UP000000595">
    <property type="component" value="Chromosome"/>
</dbReference>
<dbReference type="GO" id="GO:0016407">
    <property type="term" value="F:acetyltransferase activity"/>
    <property type="evidence" value="ECO:0007669"/>
    <property type="project" value="UniProtKB-UniRule"/>
</dbReference>
<dbReference type="GO" id="GO:0043885">
    <property type="term" value="F:anaerobic carbon-monoxide dehydrogenase activity"/>
    <property type="evidence" value="ECO:0007669"/>
    <property type="project" value="InterPro"/>
</dbReference>
<dbReference type="GO" id="GO:0043884">
    <property type="term" value="F:CO-methylating acetyl-CoA synthase activity"/>
    <property type="evidence" value="ECO:0007669"/>
    <property type="project" value="UniProtKB-EC"/>
</dbReference>
<dbReference type="GO" id="GO:0005506">
    <property type="term" value="F:iron ion binding"/>
    <property type="evidence" value="ECO:0007669"/>
    <property type="project" value="UniProtKB-UniRule"/>
</dbReference>
<dbReference type="GO" id="GO:0051536">
    <property type="term" value="F:iron-sulfur cluster binding"/>
    <property type="evidence" value="ECO:0007669"/>
    <property type="project" value="UniProtKB-KW"/>
</dbReference>
<dbReference type="GO" id="GO:0016151">
    <property type="term" value="F:nickel cation binding"/>
    <property type="evidence" value="ECO:0007669"/>
    <property type="project" value="UniProtKB-UniRule"/>
</dbReference>
<dbReference type="GO" id="GO:0006084">
    <property type="term" value="P:acetyl-CoA metabolic process"/>
    <property type="evidence" value="ECO:0007669"/>
    <property type="project" value="InterPro"/>
</dbReference>
<dbReference type="GO" id="GO:0019385">
    <property type="term" value="P:methanogenesis, from acetate"/>
    <property type="evidence" value="ECO:0007669"/>
    <property type="project" value="UniProtKB-UniRule"/>
</dbReference>
<dbReference type="FunFam" id="3.40.970.20:FF:000001">
    <property type="entry name" value="Acetyl-CoA decarbonylase/synthase complex subunit beta"/>
    <property type="match status" value="1"/>
</dbReference>
<dbReference type="FunFam" id="3.40.1470.10:FF:000001">
    <property type="entry name" value="Acetyl-CoA decarbonylase/synthase complex subunit beta 1"/>
    <property type="match status" value="1"/>
</dbReference>
<dbReference type="FunFam" id="3.30.1650.10:FF:000001">
    <property type="entry name" value="Acetyl-CoA decarbonylase/synthase complex subunit beta 2"/>
    <property type="match status" value="1"/>
</dbReference>
<dbReference type="Gene3D" id="3.30.1650.10">
    <property type="entry name" value="Bifunctional carbon monoxide dehydrogenase/acetyl-coa synthase(codh/acs), Chain M, domain 3"/>
    <property type="match status" value="1"/>
</dbReference>
<dbReference type="Gene3D" id="3.40.1470.10">
    <property type="entry name" value="Bifunctional carbon monoxide dehydrogenase/acetyl-coa synthase(codh/acs), Chain M, domain 5"/>
    <property type="match status" value="1"/>
</dbReference>
<dbReference type="Gene3D" id="3.40.970.20">
    <property type="entry name" value="Carbon monoxide dehydrogenase alpha subunit. Chain D, domain 4"/>
    <property type="match status" value="1"/>
</dbReference>
<dbReference type="HAMAP" id="MF_01138">
    <property type="entry name" value="CdhC"/>
    <property type="match status" value="1"/>
</dbReference>
<dbReference type="InterPro" id="IPR045822">
    <property type="entry name" value="ACS_CODH_B_C"/>
</dbReference>
<dbReference type="InterPro" id="IPR004461">
    <property type="entry name" value="CO_DH/Ac-CoA_synth_bsu"/>
</dbReference>
<dbReference type="InterPro" id="IPR038571">
    <property type="entry name" value="CO_DH/Ac-CoA_synth_bsu_3_sf"/>
</dbReference>
<dbReference type="InterPro" id="IPR023432">
    <property type="entry name" value="CO_DH/Ac-CoA_synth_bsu_arc"/>
</dbReference>
<dbReference type="InterPro" id="IPR011254">
    <property type="entry name" value="Prismane-like_sf"/>
</dbReference>
<dbReference type="NCBIfam" id="TIGR00316">
    <property type="entry name" value="cdhC"/>
    <property type="match status" value="1"/>
</dbReference>
<dbReference type="NCBIfam" id="NF003379">
    <property type="entry name" value="PRK04456.1"/>
    <property type="match status" value="1"/>
</dbReference>
<dbReference type="PANTHER" id="PTHR42281">
    <property type="match status" value="1"/>
</dbReference>
<dbReference type="PANTHER" id="PTHR42281:SF1">
    <property type="entry name" value="ACETYL-COA DECARBONYLASE_SYNTHASE COMPLEX SUBUNIT BETA 1"/>
    <property type="match status" value="1"/>
</dbReference>
<dbReference type="Pfam" id="PF19436">
    <property type="entry name" value="ACS_CODH_B_C"/>
    <property type="match status" value="1"/>
</dbReference>
<dbReference type="Pfam" id="PF03598">
    <property type="entry name" value="CdhC"/>
    <property type="match status" value="1"/>
</dbReference>
<dbReference type="SUPFAM" id="SSF56821">
    <property type="entry name" value="Prismane protein-like"/>
    <property type="match status" value="1"/>
</dbReference>